<accession>A2XED8</accession>
<reference key="1">
    <citation type="journal article" date="2005" name="PLoS Biol.">
        <title>The genomes of Oryza sativa: a history of duplications.</title>
        <authorList>
            <person name="Yu J."/>
            <person name="Wang J."/>
            <person name="Lin W."/>
            <person name="Li S."/>
            <person name="Li H."/>
            <person name="Zhou J."/>
            <person name="Ni P."/>
            <person name="Dong W."/>
            <person name="Hu S."/>
            <person name="Zeng C."/>
            <person name="Zhang J."/>
            <person name="Zhang Y."/>
            <person name="Li R."/>
            <person name="Xu Z."/>
            <person name="Li S."/>
            <person name="Li X."/>
            <person name="Zheng H."/>
            <person name="Cong L."/>
            <person name="Lin L."/>
            <person name="Yin J."/>
            <person name="Geng J."/>
            <person name="Li G."/>
            <person name="Shi J."/>
            <person name="Liu J."/>
            <person name="Lv H."/>
            <person name="Li J."/>
            <person name="Wang J."/>
            <person name="Deng Y."/>
            <person name="Ran L."/>
            <person name="Shi X."/>
            <person name="Wang X."/>
            <person name="Wu Q."/>
            <person name="Li C."/>
            <person name="Ren X."/>
            <person name="Wang J."/>
            <person name="Wang X."/>
            <person name="Li D."/>
            <person name="Liu D."/>
            <person name="Zhang X."/>
            <person name="Ji Z."/>
            <person name="Zhao W."/>
            <person name="Sun Y."/>
            <person name="Zhang Z."/>
            <person name="Bao J."/>
            <person name="Han Y."/>
            <person name="Dong L."/>
            <person name="Ji J."/>
            <person name="Chen P."/>
            <person name="Wu S."/>
            <person name="Liu J."/>
            <person name="Xiao Y."/>
            <person name="Bu D."/>
            <person name="Tan J."/>
            <person name="Yang L."/>
            <person name="Ye C."/>
            <person name="Zhang J."/>
            <person name="Xu J."/>
            <person name="Zhou Y."/>
            <person name="Yu Y."/>
            <person name="Zhang B."/>
            <person name="Zhuang S."/>
            <person name="Wei H."/>
            <person name="Liu B."/>
            <person name="Lei M."/>
            <person name="Yu H."/>
            <person name="Li Y."/>
            <person name="Xu H."/>
            <person name="Wei S."/>
            <person name="He X."/>
            <person name="Fang L."/>
            <person name="Zhang Z."/>
            <person name="Zhang Y."/>
            <person name="Huang X."/>
            <person name="Su Z."/>
            <person name="Tong W."/>
            <person name="Li J."/>
            <person name="Tong Z."/>
            <person name="Li S."/>
            <person name="Ye J."/>
            <person name="Wang L."/>
            <person name="Fang L."/>
            <person name="Lei T."/>
            <person name="Chen C.-S."/>
            <person name="Chen H.-C."/>
            <person name="Xu Z."/>
            <person name="Li H."/>
            <person name="Huang H."/>
            <person name="Zhang F."/>
            <person name="Xu H."/>
            <person name="Li N."/>
            <person name="Zhao C."/>
            <person name="Li S."/>
            <person name="Dong L."/>
            <person name="Huang Y."/>
            <person name="Li L."/>
            <person name="Xi Y."/>
            <person name="Qi Q."/>
            <person name="Li W."/>
            <person name="Zhang B."/>
            <person name="Hu W."/>
            <person name="Zhang Y."/>
            <person name="Tian X."/>
            <person name="Jiao Y."/>
            <person name="Liang X."/>
            <person name="Jin J."/>
            <person name="Gao L."/>
            <person name="Zheng W."/>
            <person name="Hao B."/>
            <person name="Liu S.-M."/>
            <person name="Wang W."/>
            <person name="Yuan L."/>
            <person name="Cao M."/>
            <person name="McDermott J."/>
            <person name="Samudrala R."/>
            <person name="Wang J."/>
            <person name="Wong G.K.-S."/>
            <person name="Yang H."/>
        </authorList>
    </citation>
    <scope>NUCLEOTIDE SEQUENCE [LARGE SCALE GENOMIC DNA]</scope>
    <source>
        <strain>cv. 93-11</strain>
    </source>
</reference>
<sequence length="212" mass="21773">MDPSGPGPSSAAAGGAPAVAAAPQPPAQLSRYESQKRRDWNTFLQYLRNHRPPLTLARCSGAHVIEFLRYLDQFGKTKVHASGCAFYGQPSPPGPCPCPLRQAWGSLDALIGRLRAAYEESGGTPESNPFAARAVRIYLREVRDSQAKARGIPYEKKKRKRSQAAQPAGVEPSGSSSAAAAAAGGGDTGSGGGAAATTTAQPGGSGTAPSAS</sequence>
<gene>
    <name type="ORF">OsI_10694</name>
</gene>
<organism>
    <name type="scientific">Oryza sativa subsp. indica</name>
    <name type="common">Rice</name>
    <dbReference type="NCBI Taxonomy" id="39946"/>
    <lineage>
        <taxon>Eukaryota</taxon>
        <taxon>Viridiplantae</taxon>
        <taxon>Streptophyta</taxon>
        <taxon>Embryophyta</taxon>
        <taxon>Tracheophyta</taxon>
        <taxon>Spermatophyta</taxon>
        <taxon>Magnoliopsida</taxon>
        <taxon>Liliopsida</taxon>
        <taxon>Poales</taxon>
        <taxon>Poaceae</taxon>
        <taxon>BOP clade</taxon>
        <taxon>Oryzoideae</taxon>
        <taxon>Oryzeae</taxon>
        <taxon>Oryzinae</taxon>
        <taxon>Oryza</taxon>
        <taxon>Oryza sativa</taxon>
    </lineage>
</organism>
<proteinExistence type="inferred from homology"/>
<feature type="chain" id="PRO_0000425311" description="Protein G1-like7">
    <location>
        <begin position="1"/>
        <end position="212"/>
    </location>
</feature>
<feature type="domain" description="ALOG" evidence="2">
    <location>
        <begin position="31"/>
        <end position="158"/>
    </location>
</feature>
<feature type="region of interest" description="Disordered" evidence="3">
    <location>
        <begin position="1"/>
        <end position="34"/>
    </location>
</feature>
<feature type="region of interest" description="Disordered" evidence="3">
    <location>
        <begin position="148"/>
        <end position="212"/>
    </location>
</feature>
<feature type="short sequence motif" description="Nuclear localization signal" evidence="1">
    <location>
        <begin position="156"/>
        <end position="160"/>
    </location>
</feature>
<feature type="compositionally biased region" description="Low complexity" evidence="3">
    <location>
        <begin position="1"/>
        <end position="22"/>
    </location>
</feature>
<feature type="compositionally biased region" description="Low complexity" evidence="3">
    <location>
        <begin position="173"/>
        <end position="182"/>
    </location>
</feature>
<feature type="compositionally biased region" description="Gly residues" evidence="3">
    <location>
        <begin position="183"/>
        <end position="194"/>
    </location>
</feature>
<name>G1L7_ORYSI</name>
<evidence type="ECO:0000250" key="1"/>
<evidence type="ECO:0000255" key="2">
    <source>
        <dbReference type="PROSITE-ProRule" id="PRU01033"/>
    </source>
</evidence>
<evidence type="ECO:0000256" key="3">
    <source>
        <dbReference type="SAM" id="MobiDB-lite"/>
    </source>
</evidence>
<evidence type="ECO:0000305" key="4"/>
<keyword id="KW-0217">Developmental protein</keyword>
<keyword id="KW-0238">DNA-binding</keyword>
<keyword id="KW-0539">Nucleus</keyword>
<keyword id="KW-1185">Reference proteome</keyword>
<keyword id="KW-0804">Transcription</keyword>
<keyword id="KW-0805">Transcription regulation</keyword>
<dbReference type="EMBL" id="CM000128">
    <property type="protein sequence ID" value="EAY89198.1"/>
    <property type="molecule type" value="Genomic_DNA"/>
</dbReference>
<dbReference type="SMR" id="A2XED8"/>
<dbReference type="STRING" id="39946.A2XED8"/>
<dbReference type="EnsemblPlants" id="BGIOSGA012204-TA">
    <property type="protein sequence ID" value="BGIOSGA012204-PA"/>
    <property type="gene ID" value="BGIOSGA012204"/>
</dbReference>
<dbReference type="EnsemblPlants" id="OsGoSa_01g0038010.01">
    <property type="protein sequence ID" value="OsGoSa_01g0038010.01"/>
    <property type="gene ID" value="OsGoSa_01g0038010"/>
</dbReference>
<dbReference type="EnsemblPlants" id="OsKYG_01g0037780.01">
    <property type="protein sequence ID" value="OsKYG_01g0037780.01"/>
    <property type="gene ID" value="OsKYG_01g0037780"/>
</dbReference>
<dbReference type="EnsemblPlants" id="OsLaMu_01g0037860.01">
    <property type="protein sequence ID" value="OsLaMu_01g0037860.01"/>
    <property type="gene ID" value="OsLaMu_01g0037860"/>
</dbReference>
<dbReference type="EnsemblPlants" id="OsLiXu_01g0038040.01">
    <property type="protein sequence ID" value="OsLiXu_01g0038040.01"/>
    <property type="gene ID" value="OsLiXu_01g0038040"/>
</dbReference>
<dbReference type="EnsemblPlants" id="OsMH63_01G038630_01">
    <property type="protein sequence ID" value="OsMH63_01G038630_01"/>
    <property type="gene ID" value="OsMH63_01G038630"/>
</dbReference>
<dbReference type="EnsemblPlants" id="OsPr106_01g0037820.01">
    <property type="protein sequence ID" value="OsPr106_01g0037820.01"/>
    <property type="gene ID" value="OsPr106_01g0037820"/>
</dbReference>
<dbReference type="Gramene" id="BGIOSGA012204-TA">
    <property type="protein sequence ID" value="BGIOSGA012204-PA"/>
    <property type="gene ID" value="BGIOSGA012204"/>
</dbReference>
<dbReference type="Gramene" id="OsGoSa_01g0038010.01">
    <property type="protein sequence ID" value="OsGoSa_01g0038010.01"/>
    <property type="gene ID" value="OsGoSa_01g0038010"/>
</dbReference>
<dbReference type="Gramene" id="OsKYG_01g0037780.01">
    <property type="protein sequence ID" value="OsKYG_01g0037780.01"/>
    <property type="gene ID" value="OsKYG_01g0037780"/>
</dbReference>
<dbReference type="Gramene" id="OsLaMu_01g0037860.01">
    <property type="protein sequence ID" value="OsLaMu_01g0037860.01"/>
    <property type="gene ID" value="OsLaMu_01g0037860"/>
</dbReference>
<dbReference type="Gramene" id="OsLiXu_01g0038040.01">
    <property type="protein sequence ID" value="OsLiXu_01g0038040.01"/>
    <property type="gene ID" value="OsLiXu_01g0038040"/>
</dbReference>
<dbReference type="Gramene" id="OsMH63_01G038630_01">
    <property type="protein sequence ID" value="OsMH63_01G038630_01"/>
    <property type="gene ID" value="OsMH63_01G038630"/>
</dbReference>
<dbReference type="Gramene" id="OsPr106_01g0037820.01">
    <property type="protein sequence ID" value="OsPr106_01g0037820.01"/>
    <property type="gene ID" value="OsPr106_01g0037820"/>
</dbReference>
<dbReference type="HOGENOM" id="CLU_071168_3_0_1"/>
<dbReference type="OMA" id="HTAGCAY"/>
<dbReference type="OrthoDB" id="1906822at2759"/>
<dbReference type="Proteomes" id="UP000007015">
    <property type="component" value="Chromosome 3"/>
</dbReference>
<dbReference type="GO" id="GO:0005634">
    <property type="term" value="C:nucleus"/>
    <property type="evidence" value="ECO:0000250"/>
    <property type="project" value="UniProtKB"/>
</dbReference>
<dbReference type="GO" id="GO:0003677">
    <property type="term" value="F:DNA binding"/>
    <property type="evidence" value="ECO:0007669"/>
    <property type="project" value="UniProtKB-KW"/>
</dbReference>
<dbReference type="GO" id="GO:0009299">
    <property type="term" value="P:mRNA transcription"/>
    <property type="evidence" value="ECO:0000250"/>
    <property type="project" value="UniProtKB"/>
</dbReference>
<dbReference type="GO" id="GO:0090698">
    <property type="term" value="P:post-embryonic plant morphogenesis"/>
    <property type="evidence" value="ECO:0000250"/>
    <property type="project" value="UniProtKB"/>
</dbReference>
<dbReference type="GO" id="GO:0009416">
    <property type="term" value="P:response to light stimulus"/>
    <property type="evidence" value="ECO:0007669"/>
    <property type="project" value="TreeGrafter"/>
</dbReference>
<dbReference type="InterPro" id="IPR040222">
    <property type="entry name" value="ALOG"/>
</dbReference>
<dbReference type="InterPro" id="IPR006936">
    <property type="entry name" value="ALOG_dom"/>
</dbReference>
<dbReference type="PANTHER" id="PTHR31165">
    <property type="entry name" value="PROTEIN G1-LIKE2"/>
    <property type="match status" value="1"/>
</dbReference>
<dbReference type="PANTHER" id="PTHR31165:SF78">
    <property type="entry name" value="PROTEIN G1-LIKE7"/>
    <property type="match status" value="1"/>
</dbReference>
<dbReference type="Pfam" id="PF04852">
    <property type="entry name" value="ALOG_dom"/>
    <property type="match status" value="1"/>
</dbReference>
<dbReference type="PROSITE" id="PS51697">
    <property type="entry name" value="ALOG"/>
    <property type="match status" value="1"/>
</dbReference>
<comment type="function">
    <text evidence="1">Probable transcription regulator that acts as a developmental regulator by promoting cell growth in response to light.</text>
</comment>
<comment type="subcellular location">
    <subcellularLocation>
        <location evidence="1">Nucleus</location>
    </subcellularLocation>
</comment>
<comment type="similarity">
    <text evidence="4">Belongs to the plant homeotic and developmental regulators ALOG protein family.</text>
</comment>
<protein>
    <recommendedName>
        <fullName>Protein G1-like7</fullName>
    </recommendedName>
</protein>